<gene>
    <name type="primary">rps1</name>
    <name type="ORF">AFLA_047870</name>
</gene>
<feature type="initiator methionine" description="Removed" evidence="1">
    <location>
        <position position="1"/>
    </location>
</feature>
<feature type="chain" id="PRO_0000389357" description="Small ribosomal subunit protein eS1">
    <location>
        <begin position="2"/>
        <end position="256"/>
    </location>
</feature>
<feature type="region of interest" description="Disordered" evidence="2">
    <location>
        <begin position="1"/>
        <end position="20"/>
    </location>
</feature>
<feature type="compositionally biased region" description="Basic residues" evidence="2">
    <location>
        <begin position="1"/>
        <end position="18"/>
    </location>
</feature>
<feature type="modified residue" description="N-acetylalanine; partial" evidence="1">
    <location>
        <position position="2"/>
    </location>
</feature>
<keyword id="KW-0007">Acetylation</keyword>
<keyword id="KW-0963">Cytoplasm</keyword>
<keyword id="KW-0687">Ribonucleoprotein</keyword>
<keyword id="KW-0689">Ribosomal protein</keyword>
<sequence length="256" mass="29211">MAVGKNKRLSKGKKGIKKRTVDPFSRKDEYSVKAPSTFQIRDVGKTLVNRTSGLKNANDSLKGRIFEVSLADLQNDEDHAFRKVKLRVDEIQGKNCLTNFHGLDFTTDKLRSLVRKWQSLIEANVTVKTTDDYLLRLFAIAFTKRRPNQIKKTTYARSSQIRAIRKKMTEIMQREAASCTLSQLTTKLIPEVIGREIEKATQGIYPLQNVHIRKVKLLKAPKFDLGALLNLHGESTTDDKGHKVEREFKEQVLESV</sequence>
<comment type="subunit">
    <text evidence="1">Component of the small ribosomal subunit. Mature ribosomes consist of a small (40S) and a large (60S) subunit. The 40S subunit contains about 33 different proteins and 1 molecule of RNA (18S). The 60S subunit contains about 49 different proteins and 3 molecules of RNA (25S, 5.8S and 5S).</text>
</comment>
<comment type="subcellular location">
    <subcellularLocation>
        <location evidence="1">Cytoplasm</location>
    </subcellularLocation>
</comment>
<comment type="similarity">
    <text evidence="1">Belongs to the eukaryotic ribosomal protein eS1 family.</text>
</comment>
<proteinExistence type="inferred from homology"/>
<dbReference type="EMBL" id="EQ963483">
    <property type="protein sequence ID" value="EED46744.1"/>
    <property type="molecule type" value="Genomic_DNA"/>
</dbReference>
<dbReference type="RefSeq" id="XP_002382924.1">
    <property type="nucleotide sequence ID" value="XM_002382883.1"/>
</dbReference>
<dbReference type="SMR" id="B8NSD4"/>
<dbReference type="STRING" id="332952.B8NSD4"/>
<dbReference type="EnsemblFungi" id="EED46744">
    <property type="protein sequence ID" value="EED46744"/>
    <property type="gene ID" value="AFLA_047870"/>
</dbReference>
<dbReference type="VEuPathDB" id="FungiDB:AFLA_010651"/>
<dbReference type="eggNOG" id="KOG1628">
    <property type="taxonomic scope" value="Eukaryota"/>
</dbReference>
<dbReference type="HOGENOM" id="CLU_062507_0_0_1"/>
<dbReference type="OMA" id="TRFKGHE"/>
<dbReference type="GO" id="GO:0022627">
    <property type="term" value="C:cytosolic small ribosomal subunit"/>
    <property type="evidence" value="ECO:0007669"/>
    <property type="project" value="UniProtKB-UniRule"/>
</dbReference>
<dbReference type="GO" id="GO:0003735">
    <property type="term" value="F:structural constituent of ribosome"/>
    <property type="evidence" value="ECO:0007669"/>
    <property type="project" value="UniProtKB-UniRule"/>
</dbReference>
<dbReference type="GO" id="GO:0006412">
    <property type="term" value="P:translation"/>
    <property type="evidence" value="ECO:0007669"/>
    <property type="project" value="UniProtKB-UniRule"/>
</dbReference>
<dbReference type="HAMAP" id="MF_03122">
    <property type="entry name" value="Ribosomal_eS1_euk"/>
    <property type="match status" value="1"/>
</dbReference>
<dbReference type="InterPro" id="IPR001593">
    <property type="entry name" value="Ribosomal_eS1"/>
</dbReference>
<dbReference type="InterPro" id="IPR018281">
    <property type="entry name" value="Ribosomal_eS1_CS"/>
</dbReference>
<dbReference type="InterPro" id="IPR027500">
    <property type="entry name" value="Ribosomal_eS1_euk"/>
</dbReference>
<dbReference type="PANTHER" id="PTHR11830">
    <property type="entry name" value="40S RIBOSOMAL PROTEIN S3A"/>
    <property type="match status" value="1"/>
</dbReference>
<dbReference type="Pfam" id="PF01015">
    <property type="entry name" value="Ribosomal_S3Ae"/>
    <property type="match status" value="1"/>
</dbReference>
<dbReference type="SMART" id="SM01397">
    <property type="entry name" value="Ribosomal_S3Ae"/>
    <property type="match status" value="1"/>
</dbReference>
<dbReference type="PROSITE" id="PS01191">
    <property type="entry name" value="RIBOSOMAL_S3AE"/>
    <property type="match status" value="1"/>
</dbReference>
<evidence type="ECO:0000255" key="1">
    <source>
        <dbReference type="HAMAP-Rule" id="MF_03122"/>
    </source>
</evidence>
<evidence type="ECO:0000256" key="2">
    <source>
        <dbReference type="SAM" id="MobiDB-lite"/>
    </source>
</evidence>
<evidence type="ECO:0000305" key="3"/>
<reference key="1">
    <citation type="journal article" date="2015" name="Genome Announc.">
        <title>Genome sequence of Aspergillus flavus NRRL 3357, a strain that causes aflatoxin contamination of food and feed.</title>
        <authorList>
            <person name="Nierman W.C."/>
            <person name="Yu J."/>
            <person name="Fedorova-Abrams N.D."/>
            <person name="Losada L."/>
            <person name="Cleveland T.E."/>
            <person name="Bhatnagar D."/>
            <person name="Bennett J.W."/>
            <person name="Dean R."/>
            <person name="Payne G.A."/>
        </authorList>
    </citation>
    <scope>NUCLEOTIDE SEQUENCE [LARGE SCALE GENOMIC DNA]</scope>
    <source>
        <strain>ATCC 200026 / FGSC A1120 / IAM 13836 / NRRL 3357 / JCM 12722 / SRRC 167</strain>
    </source>
</reference>
<organism>
    <name type="scientific">Aspergillus flavus (strain ATCC 200026 / FGSC A1120 / IAM 13836 / NRRL 3357 / JCM 12722 / SRRC 167)</name>
    <dbReference type="NCBI Taxonomy" id="332952"/>
    <lineage>
        <taxon>Eukaryota</taxon>
        <taxon>Fungi</taxon>
        <taxon>Dikarya</taxon>
        <taxon>Ascomycota</taxon>
        <taxon>Pezizomycotina</taxon>
        <taxon>Eurotiomycetes</taxon>
        <taxon>Eurotiomycetidae</taxon>
        <taxon>Eurotiales</taxon>
        <taxon>Aspergillaceae</taxon>
        <taxon>Aspergillus</taxon>
        <taxon>Aspergillus subgen. Circumdati</taxon>
    </lineage>
</organism>
<accession>B8NSD4</accession>
<protein>
    <recommendedName>
        <fullName evidence="1">Small ribosomal subunit protein eS1</fullName>
    </recommendedName>
    <alternativeName>
        <fullName evidence="3">40S ribosomal protein S1</fullName>
    </alternativeName>
</protein>
<name>RS3A_ASPFN</name>